<feature type="chain" id="PRO_0000266178" description="CTP synthase">
    <location>
        <begin position="1"/>
        <end position="558"/>
    </location>
</feature>
<feature type="domain" description="Glutamine amidotransferase type-1" evidence="1">
    <location>
        <begin position="292"/>
        <end position="534"/>
    </location>
</feature>
<feature type="region of interest" description="Amidoligase domain" evidence="1">
    <location>
        <begin position="1"/>
        <end position="267"/>
    </location>
</feature>
<feature type="region of interest" description="Disordered" evidence="2">
    <location>
        <begin position="536"/>
        <end position="558"/>
    </location>
</feature>
<feature type="compositionally biased region" description="Polar residues" evidence="2">
    <location>
        <begin position="542"/>
        <end position="558"/>
    </location>
</feature>
<feature type="active site" description="Nucleophile; for glutamine hydrolysis" evidence="1">
    <location>
        <position position="381"/>
    </location>
</feature>
<feature type="active site" evidence="1">
    <location>
        <position position="507"/>
    </location>
</feature>
<feature type="active site" evidence="1">
    <location>
        <position position="509"/>
    </location>
</feature>
<feature type="binding site" evidence="1">
    <location>
        <position position="13"/>
    </location>
    <ligand>
        <name>CTP</name>
        <dbReference type="ChEBI" id="CHEBI:37563"/>
        <note>allosteric inhibitor</note>
    </ligand>
</feature>
<feature type="binding site" evidence="1">
    <location>
        <position position="13"/>
    </location>
    <ligand>
        <name>UTP</name>
        <dbReference type="ChEBI" id="CHEBI:46398"/>
    </ligand>
</feature>
<feature type="binding site" evidence="1">
    <location>
        <begin position="14"/>
        <end position="19"/>
    </location>
    <ligand>
        <name>ATP</name>
        <dbReference type="ChEBI" id="CHEBI:30616"/>
    </ligand>
</feature>
<feature type="binding site" evidence="1">
    <location>
        <position position="71"/>
    </location>
    <ligand>
        <name>ATP</name>
        <dbReference type="ChEBI" id="CHEBI:30616"/>
    </ligand>
</feature>
<feature type="binding site" evidence="1">
    <location>
        <position position="71"/>
    </location>
    <ligand>
        <name>Mg(2+)</name>
        <dbReference type="ChEBI" id="CHEBI:18420"/>
    </ligand>
</feature>
<feature type="binding site" evidence="1">
    <location>
        <position position="141"/>
    </location>
    <ligand>
        <name>Mg(2+)</name>
        <dbReference type="ChEBI" id="CHEBI:18420"/>
    </ligand>
</feature>
<feature type="binding site" evidence="1">
    <location>
        <begin position="148"/>
        <end position="150"/>
    </location>
    <ligand>
        <name>CTP</name>
        <dbReference type="ChEBI" id="CHEBI:37563"/>
        <note>allosteric inhibitor</note>
    </ligand>
</feature>
<feature type="binding site" evidence="1">
    <location>
        <begin position="188"/>
        <end position="193"/>
    </location>
    <ligand>
        <name>CTP</name>
        <dbReference type="ChEBI" id="CHEBI:37563"/>
        <note>allosteric inhibitor</note>
    </ligand>
</feature>
<feature type="binding site" evidence="1">
    <location>
        <begin position="188"/>
        <end position="193"/>
    </location>
    <ligand>
        <name>UTP</name>
        <dbReference type="ChEBI" id="CHEBI:46398"/>
    </ligand>
</feature>
<feature type="binding site" evidence="1">
    <location>
        <position position="224"/>
    </location>
    <ligand>
        <name>CTP</name>
        <dbReference type="ChEBI" id="CHEBI:37563"/>
        <note>allosteric inhibitor</note>
    </ligand>
</feature>
<feature type="binding site" evidence="1">
    <location>
        <position position="224"/>
    </location>
    <ligand>
        <name>UTP</name>
        <dbReference type="ChEBI" id="CHEBI:46398"/>
    </ligand>
</feature>
<feature type="binding site" evidence="1">
    <location>
        <position position="354"/>
    </location>
    <ligand>
        <name>L-glutamine</name>
        <dbReference type="ChEBI" id="CHEBI:58359"/>
    </ligand>
</feature>
<feature type="binding site" evidence="1">
    <location>
        <begin position="382"/>
        <end position="385"/>
    </location>
    <ligand>
        <name>L-glutamine</name>
        <dbReference type="ChEBI" id="CHEBI:58359"/>
    </ligand>
</feature>
<feature type="binding site" evidence="1">
    <location>
        <position position="405"/>
    </location>
    <ligand>
        <name>L-glutamine</name>
        <dbReference type="ChEBI" id="CHEBI:58359"/>
    </ligand>
</feature>
<feature type="binding site" evidence="1">
    <location>
        <position position="462"/>
    </location>
    <ligand>
        <name>L-glutamine</name>
        <dbReference type="ChEBI" id="CHEBI:58359"/>
    </ligand>
</feature>
<protein>
    <recommendedName>
        <fullName evidence="1">CTP synthase</fullName>
        <ecNumber evidence="1">6.3.4.2</ecNumber>
    </recommendedName>
    <alternativeName>
        <fullName evidence="1">Cytidine 5'-triphosphate synthase</fullName>
    </alternativeName>
    <alternativeName>
        <fullName evidence="1">Cytidine triphosphate synthetase</fullName>
        <shortName evidence="1">CTP synthetase</shortName>
        <shortName evidence="1">CTPS</shortName>
    </alternativeName>
    <alternativeName>
        <fullName evidence="1">UTP--ammonia ligase</fullName>
    </alternativeName>
</protein>
<name>PYRG_PROMM</name>
<reference key="1">
    <citation type="journal article" date="2003" name="Nature">
        <title>Genome divergence in two Prochlorococcus ecotypes reflects oceanic niche differentiation.</title>
        <authorList>
            <person name="Rocap G."/>
            <person name="Larimer F.W."/>
            <person name="Lamerdin J.E."/>
            <person name="Malfatti S."/>
            <person name="Chain P."/>
            <person name="Ahlgren N.A."/>
            <person name="Arellano A."/>
            <person name="Coleman M."/>
            <person name="Hauser L."/>
            <person name="Hess W.R."/>
            <person name="Johnson Z.I."/>
            <person name="Land M.L."/>
            <person name="Lindell D."/>
            <person name="Post A.F."/>
            <person name="Regala W."/>
            <person name="Shah M."/>
            <person name="Shaw S.L."/>
            <person name="Steglich C."/>
            <person name="Sullivan M.B."/>
            <person name="Ting C.S."/>
            <person name="Tolonen A."/>
            <person name="Webb E.A."/>
            <person name="Zinser E.R."/>
            <person name="Chisholm S.W."/>
        </authorList>
    </citation>
    <scope>NUCLEOTIDE SEQUENCE [LARGE SCALE GENOMIC DNA]</scope>
    <source>
        <strain>MIT 9313</strain>
    </source>
</reference>
<keyword id="KW-0067">ATP-binding</keyword>
<keyword id="KW-0315">Glutamine amidotransferase</keyword>
<keyword id="KW-0436">Ligase</keyword>
<keyword id="KW-0460">Magnesium</keyword>
<keyword id="KW-0479">Metal-binding</keyword>
<keyword id="KW-0547">Nucleotide-binding</keyword>
<keyword id="KW-0665">Pyrimidine biosynthesis</keyword>
<keyword id="KW-1185">Reference proteome</keyword>
<evidence type="ECO:0000255" key="1">
    <source>
        <dbReference type="HAMAP-Rule" id="MF_01227"/>
    </source>
</evidence>
<evidence type="ECO:0000256" key="2">
    <source>
        <dbReference type="SAM" id="MobiDB-lite"/>
    </source>
</evidence>
<sequence length="558" mass="61149">MAKFVFVTGGVVSSIGKGIVAASLGRLLKSRGYSVSILKLDPYLNVDPGTMSPFQHGEVFVTEDGAETDLDLGHYERFTDTAMSRLNSVTTGSIYQAVINKERRGDYNGGTVQVIPHITGEIRERIHRVAANSGADVVITEIGGTVGDIESLPFLEAIREFRGDVGRNDLAYIHVTLLPFIGTSGELKTKPTQHSVKELRAIGIQPDVLVCRSDRPINEDLKSKIGGFCGVPNRAVITALDADSIYAVPISLEEEGLCLEMLDVLNLTDHDSDMKSWVELVHKLRNPGPAVKVALVGKYVQLNDAYLSVVEALRHACLTQDASLELSWVCAEQIETHGPENLLKGMDAVVVPGGFGNRGVDGKVAAIRWAREQRVPFLGLCLGMQCAVIEWARNQAGLTGASSSELEPDTNHPVIHLLPEQQDVVDLGGTMRLGVYPCRIAPDTLAQKLYGEQVVYERHRHRYEFNNSYRNLFIESGYTISGSSPDGRLVELIELKGHPFFTACQYHPEFLSRPGKPHPLFRGLIEAAQLRLPASPDEALRRQSQTNISAQEQPSRIG</sequence>
<proteinExistence type="inferred from homology"/>
<gene>
    <name evidence="1" type="primary">pyrG</name>
    <name type="ordered locus">PMT_2219</name>
</gene>
<dbReference type="EC" id="6.3.4.2" evidence="1"/>
<dbReference type="EMBL" id="BX548175">
    <property type="protein sequence ID" value="CAE22393.1"/>
    <property type="molecule type" value="Genomic_DNA"/>
</dbReference>
<dbReference type="RefSeq" id="WP_011131583.1">
    <property type="nucleotide sequence ID" value="NC_005071.1"/>
</dbReference>
<dbReference type="SMR" id="Q7V3W8"/>
<dbReference type="KEGG" id="pmt:PMT_2219"/>
<dbReference type="eggNOG" id="COG0504">
    <property type="taxonomic scope" value="Bacteria"/>
</dbReference>
<dbReference type="HOGENOM" id="CLU_011675_5_0_3"/>
<dbReference type="OrthoDB" id="9801107at2"/>
<dbReference type="UniPathway" id="UPA00159">
    <property type="reaction ID" value="UER00277"/>
</dbReference>
<dbReference type="Proteomes" id="UP000001423">
    <property type="component" value="Chromosome"/>
</dbReference>
<dbReference type="GO" id="GO:0005829">
    <property type="term" value="C:cytosol"/>
    <property type="evidence" value="ECO:0007669"/>
    <property type="project" value="TreeGrafter"/>
</dbReference>
<dbReference type="GO" id="GO:0005524">
    <property type="term" value="F:ATP binding"/>
    <property type="evidence" value="ECO:0007669"/>
    <property type="project" value="UniProtKB-KW"/>
</dbReference>
<dbReference type="GO" id="GO:0003883">
    <property type="term" value="F:CTP synthase activity"/>
    <property type="evidence" value="ECO:0007669"/>
    <property type="project" value="UniProtKB-UniRule"/>
</dbReference>
<dbReference type="GO" id="GO:0004359">
    <property type="term" value="F:glutaminase activity"/>
    <property type="evidence" value="ECO:0007669"/>
    <property type="project" value="RHEA"/>
</dbReference>
<dbReference type="GO" id="GO:0042802">
    <property type="term" value="F:identical protein binding"/>
    <property type="evidence" value="ECO:0007669"/>
    <property type="project" value="TreeGrafter"/>
</dbReference>
<dbReference type="GO" id="GO:0046872">
    <property type="term" value="F:metal ion binding"/>
    <property type="evidence" value="ECO:0007669"/>
    <property type="project" value="UniProtKB-KW"/>
</dbReference>
<dbReference type="GO" id="GO:0044210">
    <property type="term" value="P:'de novo' CTP biosynthetic process"/>
    <property type="evidence" value="ECO:0007669"/>
    <property type="project" value="UniProtKB-UniRule"/>
</dbReference>
<dbReference type="GO" id="GO:0019856">
    <property type="term" value="P:pyrimidine nucleobase biosynthetic process"/>
    <property type="evidence" value="ECO:0007669"/>
    <property type="project" value="TreeGrafter"/>
</dbReference>
<dbReference type="CDD" id="cd03113">
    <property type="entry name" value="CTPS_N"/>
    <property type="match status" value="1"/>
</dbReference>
<dbReference type="CDD" id="cd01746">
    <property type="entry name" value="GATase1_CTP_Synthase"/>
    <property type="match status" value="1"/>
</dbReference>
<dbReference type="FunFam" id="3.40.50.300:FF:000009">
    <property type="entry name" value="CTP synthase"/>
    <property type="match status" value="1"/>
</dbReference>
<dbReference type="FunFam" id="3.40.50.880:FF:000002">
    <property type="entry name" value="CTP synthase"/>
    <property type="match status" value="1"/>
</dbReference>
<dbReference type="Gene3D" id="3.40.50.880">
    <property type="match status" value="1"/>
</dbReference>
<dbReference type="Gene3D" id="3.40.50.300">
    <property type="entry name" value="P-loop containing nucleotide triphosphate hydrolases"/>
    <property type="match status" value="1"/>
</dbReference>
<dbReference type="HAMAP" id="MF_01227">
    <property type="entry name" value="PyrG"/>
    <property type="match status" value="1"/>
</dbReference>
<dbReference type="InterPro" id="IPR029062">
    <property type="entry name" value="Class_I_gatase-like"/>
</dbReference>
<dbReference type="InterPro" id="IPR004468">
    <property type="entry name" value="CTP_synthase"/>
</dbReference>
<dbReference type="InterPro" id="IPR017456">
    <property type="entry name" value="CTP_synthase_N"/>
</dbReference>
<dbReference type="InterPro" id="IPR017926">
    <property type="entry name" value="GATASE"/>
</dbReference>
<dbReference type="InterPro" id="IPR033828">
    <property type="entry name" value="GATase1_CTP_Synthase"/>
</dbReference>
<dbReference type="InterPro" id="IPR027417">
    <property type="entry name" value="P-loop_NTPase"/>
</dbReference>
<dbReference type="NCBIfam" id="NF003792">
    <property type="entry name" value="PRK05380.1"/>
    <property type="match status" value="1"/>
</dbReference>
<dbReference type="NCBIfam" id="TIGR00337">
    <property type="entry name" value="PyrG"/>
    <property type="match status" value="1"/>
</dbReference>
<dbReference type="PANTHER" id="PTHR11550">
    <property type="entry name" value="CTP SYNTHASE"/>
    <property type="match status" value="1"/>
</dbReference>
<dbReference type="PANTHER" id="PTHR11550:SF0">
    <property type="entry name" value="CTP SYNTHASE-RELATED"/>
    <property type="match status" value="1"/>
</dbReference>
<dbReference type="Pfam" id="PF06418">
    <property type="entry name" value="CTP_synth_N"/>
    <property type="match status" value="1"/>
</dbReference>
<dbReference type="Pfam" id="PF00117">
    <property type="entry name" value="GATase"/>
    <property type="match status" value="1"/>
</dbReference>
<dbReference type="SUPFAM" id="SSF52317">
    <property type="entry name" value="Class I glutamine amidotransferase-like"/>
    <property type="match status" value="1"/>
</dbReference>
<dbReference type="SUPFAM" id="SSF52540">
    <property type="entry name" value="P-loop containing nucleoside triphosphate hydrolases"/>
    <property type="match status" value="1"/>
</dbReference>
<dbReference type="PROSITE" id="PS51273">
    <property type="entry name" value="GATASE_TYPE_1"/>
    <property type="match status" value="1"/>
</dbReference>
<accession>Q7V3W8</accession>
<organism>
    <name type="scientific">Prochlorococcus marinus (strain MIT 9313)</name>
    <dbReference type="NCBI Taxonomy" id="74547"/>
    <lineage>
        <taxon>Bacteria</taxon>
        <taxon>Bacillati</taxon>
        <taxon>Cyanobacteriota</taxon>
        <taxon>Cyanophyceae</taxon>
        <taxon>Synechococcales</taxon>
        <taxon>Prochlorococcaceae</taxon>
        <taxon>Prochlorococcus</taxon>
    </lineage>
</organism>
<comment type="function">
    <text evidence="1">Catalyzes the ATP-dependent amination of UTP to CTP with either L-glutamine or ammonia as the source of nitrogen. Regulates intracellular CTP levels through interactions with the four ribonucleotide triphosphates.</text>
</comment>
<comment type="catalytic activity">
    <reaction evidence="1">
        <text>UTP + L-glutamine + ATP + H2O = CTP + L-glutamate + ADP + phosphate + 2 H(+)</text>
        <dbReference type="Rhea" id="RHEA:26426"/>
        <dbReference type="ChEBI" id="CHEBI:15377"/>
        <dbReference type="ChEBI" id="CHEBI:15378"/>
        <dbReference type="ChEBI" id="CHEBI:29985"/>
        <dbReference type="ChEBI" id="CHEBI:30616"/>
        <dbReference type="ChEBI" id="CHEBI:37563"/>
        <dbReference type="ChEBI" id="CHEBI:43474"/>
        <dbReference type="ChEBI" id="CHEBI:46398"/>
        <dbReference type="ChEBI" id="CHEBI:58359"/>
        <dbReference type="ChEBI" id="CHEBI:456216"/>
        <dbReference type="EC" id="6.3.4.2"/>
    </reaction>
</comment>
<comment type="catalytic activity">
    <reaction evidence="1">
        <text>L-glutamine + H2O = L-glutamate + NH4(+)</text>
        <dbReference type="Rhea" id="RHEA:15889"/>
        <dbReference type="ChEBI" id="CHEBI:15377"/>
        <dbReference type="ChEBI" id="CHEBI:28938"/>
        <dbReference type="ChEBI" id="CHEBI:29985"/>
        <dbReference type="ChEBI" id="CHEBI:58359"/>
    </reaction>
</comment>
<comment type="catalytic activity">
    <reaction evidence="1">
        <text>UTP + NH4(+) + ATP = CTP + ADP + phosphate + 2 H(+)</text>
        <dbReference type="Rhea" id="RHEA:16597"/>
        <dbReference type="ChEBI" id="CHEBI:15378"/>
        <dbReference type="ChEBI" id="CHEBI:28938"/>
        <dbReference type="ChEBI" id="CHEBI:30616"/>
        <dbReference type="ChEBI" id="CHEBI:37563"/>
        <dbReference type="ChEBI" id="CHEBI:43474"/>
        <dbReference type="ChEBI" id="CHEBI:46398"/>
        <dbReference type="ChEBI" id="CHEBI:456216"/>
    </reaction>
</comment>
<comment type="activity regulation">
    <text evidence="1">Allosterically activated by GTP, when glutamine is the substrate; GTP has no effect on the reaction when ammonia is the substrate. The allosteric effector GTP functions by stabilizing the protein conformation that binds the tetrahedral intermediate(s) formed during glutamine hydrolysis. Inhibited by the product CTP, via allosteric rather than competitive inhibition.</text>
</comment>
<comment type="pathway">
    <text evidence="1">Pyrimidine metabolism; CTP biosynthesis via de novo pathway; CTP from UDP: step 2/2.</text>
</comment>
<comment type="subunit">
    <text evidence="1">Homotetramer.</text>
</comment>
<comment type="miscellaneous">
    <text evidence="1">CTPSs have evolved a hybrid strategy for distinguishing between UTP and CTP. The overlapping regions of the product feedback inhibitory and substrate sites recognize a common feature in both compounds, the triphosphate moiety. To differentiate isosteric substrate and product pyrimidine rings, an additional pocket far from the expected kinase/ligase catalytic site, specifically recognizes the cytosine and ribose portions of the product inhibitor.</text>
</comment>
<comment type="similarity">
    <text evidence="1">Belongs to the CTP synthase family.</text>
</comment>